<comment type="function">
    <text evidence="1">This is one of the proteins that bind and probably mediate the attachment of the 5S RNA into the large ribosomal subunit, where it forms part of the central protuberance.</text>
</comment>
<comment type="subunit">
    <text evidence="1">Part of the 50S ribosomal subunit. Contacts the 5S and 23S rRNAs.</text>
</comment>
<comment type="similarity">
    <text evidence="1">Belongs to the universal ribosomal protein uL18 family.</text>
</comment>
<proteinExistence type="inferred from homology"/>
<evidence type="ECO:0000255" key="1">
    <source>
        <dbReference type="HAMAP-Rule" id="MF_01337"/>
    </source>
</evidence>
<evidence type="ECO:0000305" key="2"/>
<keyword id="KW-1185">Reference proteome</keyword>
<keyword id="KW-0687">Ribonucleoprotein</keyword>
<keyword id="KW-0689">Ribosomal protein</keyword>
<keyword id="KW-0694">RNA-binding</keyword>
<keyword id="KW-0699">rRNA-binding</keyword>
<sequence length="214" mass="24325">MGRGPRYRVPLRRRREGKTNYYRRFRLVKSGKPRMAVRISNEYLWVQFLEARIEGDRVIAAAHSRELIKKFGWKGDGNNTCAAYLTGYLAGLRALEKGVREAVLDVGLHKPVKGSRVFAALKGALDAGVEIPHSEEILPGDERVRCEHIAQWAEALKEENAELYQRQFSRYLDRGLNPEELPGHVEEVKKAIEEAYKHVAEETAAEGEEVEVKA</sequence>
<feature type="chain" id="PRO_0000131398" description="Large ribosomal subunit protein uL18">
    <location>
        <begin position="1"/>
        <end position="214"/>
    </location>
</feature>
<organism>
    <name type="scientific">Aeropyrum pernix (strain ATCC 700893 / DSM 11879 / JCM 9820 / NBRC 100138 / K1)</name>
    <dbReference type="NCBI Taxonomy" id="272557"/>
    <lineage>
        <taxon>Archaea</taxon>
        <taxon>Thermoproteota</taxon>
        <taxon>Thermoprotei</taxon>
        <taxon>Desulfurococcales</taxon>
        <taxon>Desulfurococcaceae</taxon>
        <taxon>Aeropyrum</taxon>
    </lineage>
</organism>
<accession>Q9YF94</accession>
<dbReference type="EMBL" id="BA000002">
    <property type="protein sequence ID" value="BAA79302.1"/>
    <property type="molecule type" value="Genomic_DNA"/>
</dbReference>
<dbReference type="PIR" id="B72726">
    <property type="entry name" value="B72726"/>
</dbReference>
<dbReference type="RefSeq" id="WP_010865681.1">
    <property type="nucleotide sequence ID" value="NC_000854.2"/>
</dbReference>
<dbReference type="SMR" id="Q9YF94"/>
<dbReference type="STRING" id="272557.APE_0347"/>
<dbReference type="EnsemblBacteria" id="BAA79302">
    <property type="protein sequence ID" value="BAA79302"/>
    <property type="gene ID" value="APE_0347"/>
</dbReference>
<dbReference type="GeneID" id="1444565"/>
<dbReference type="KEGG" id="ape:APE_0347"/>
<dbReference type="PATRIC" id="fig|272557.25.peg.267"/>
<dbReference type="eggNOG" id="arCOG04088">
    <property type="taxonomic scope" value="Archaea"/>
</dbReference>
<dbReference type="Proteomes" id="UP000002518">
    <property type="component" value="Chromosome"/>
</dbReference>
<dbReference type="GO" id="GO:0022625">
    <property type="term" value="C:cytosolic large ribosomal subunit"/>
    <property type="evidence" value="ECO:0007669"/>
    <property type="project" value="TreeGrafter"/>
</dbReference>
<dbReference type="GO" id="GO:0008097">
    <property type="term" value="F:5S rRNA binding"/>
    <property type="evidence" value="ECO:0007669"/>
    <property type="project" value="InterPro"/>
</dbReference>
<dbReference type="GO" id="GO:0003735">
    <property type="term" value="F:structural constituent of ribosome"/>
    <property type="evidence" value="ECO:0007669"/>
    <property type="project" value="InterPro"/>
</dbReference>
<dbReference type="GO" id="GO:0000027">
    <property type="term" value="P:ribosomal large subunit assembly"/>
    <property type="evidence" value="ECO:0007669"/>
    <property type="project" value="TreeGrafter"/>
</dbReference>
<dbReference type="GO" id="GO:0006412">
    <property type="term" value="P:translation"/>
    <property type="evidence" value="ECO:0007669"/>
    <property type="project" value="UniProtKB-UniRule"/>
</dbReference>
<dbReference type="CDD" id="cd00432">
    <property type="entry name" value="Ribosomal_L18_L5e"/>
    <property type="match status" value="1"/>
</dbReference>
<dbReference type="Gene3D" id="3.30.420.100">
    <property type="match status" value="1"/>
</dbReference>
<dbReference type="HAMAP" id="MF_01337_A">
    <property type="entry name" value="Ribosomal_uL18_A"/>
    <property type="match status" value="1"/>
</dbReference>
<dbReference type="InterPro" id="IPR005485">
    <property type="entry name" value="Rbsml_uL18_euk"/>
</dbReference>
<dbReference type="NCBIfam" id="NF006342">
    <property type="entry name" value="PRK08569.1"/>
    <property type="match status" value="1"/>
</dbReference>
<dbReference type="PANTHER" id="PTHR23410:SF12">
    <property type="entry name" value="LARGE RIBOSOMAL SUBUNIT PROTEIN UL18"/>
    <property type="match status" value="1"/>
</dbReference>
<dbReference type="PANTHER" id="PTHR23410">
    <property type="entry name" value="RIBOSOMAL PROTEIN L5-RELATED"/>
    <property type="match status" value="1"/>
</dbReference>
<dbReference type="Pfam" id="PF17144">
    <property type="entry name" value="Ribosomal_L5e"/>
    <property type="match status" value="2"/>
</dbReference>
<dbReference type="PRINTS" id="PR00058">
    <property type="entry name" value="RIBOSOMALL5"/>
</dbReference>
<dbReference type="SUPFAM" id="SSF53137">
    <property type="entry name" value="Translational machinery components"/>
    <property type="match status" value="1"/>
</dbReference>
<protein>
    <recommendedName>
        <fullName evidence="1">Large ribosomal subunit protein uL18</fullName>
    </recommendedName>
    <alternativeName>
        <fullName evidence="2">50S ribosomal protein L18</fullName>
    </alternativeName>
</protein>
<gene>
    <name evidence="1" type="primary">rpl18</name>
    <name type="ordered locus">APE_0347</name>
</gene>
<reference key="1">
    <citation type="journal article" date="1999" name="DNA Res.">
        <title>Complete genome sequence of an aerobic hyper-thermophilic crenarchaeon, Aeropyrum pernix K1.</title>
        <authorList>
            <person name="Kawarabayasi Y."/>
            <person name="Hino Y."/>
            <person name="Horikawa H."/>
            <person name="Yamazaki S."/>
            <person name="Haikawa Y."/>
            <person name="Jin-no K."/>
            <person name="Takahashi M."/>
            <person name="Sekine M."/>
            <person name="Baba S."/>
            <person name="Ankai A."/>
            <person name="Kosugi H."/>
            <person name="Hosoyama A."/>
            <person name="Fukui S."/>
            <person name="Nagai Y."/>
            <person name="Nishijima K."/>
            <person name="Nakazawa H."/>
            <person name="Takamiya M."/>
            <person name="Masuda S."/>
            <person name="Funahashi T."/>
            <person name="Tanaka T."/>
            <person name="Kudoh Y."/>
            <person name="Yamazaki J."/>
            <person name="Kushida N."/>
            <person name="Oguchi A."/>
            <person name="Aoki K."/>
            <person name="Kubota K."/>
            <person name="Nakamura Y."/>
            <person name="Nomura N."/>
            <person name="Sako Y."/>
            <person name="Kikuchi H."/>
        </authorList>
    </citation>
    <scope>NUCLEOTIDE SEQUENCE [LARGE SCALE GENOMIC DNA]</scope>
    <source>
        <strain>ATCC 700893 / DSM 11879 / JCM 9820 / NBRC 100138 / K1</strain>
    </source>
</reference>
<name>RL18_AERPE</name>